<sequence>MSAKEKFTSISPAEFFKRNPELAGFSNPARAMYQALRELVENALDATDVHEILPSIKVIIERTSQEKEIYRLTVEDNGIGIPPHVVPDAFGRVLYSSKYVLRQTRGMYGLGVKAAVLYSQMYQDKPIEITTAPLNSKRIYSFKLKIDVTKNEPIIYERGSVNNDTGYHGTSVSMYILGDWMRAKSRVYEYIKRTYIITPYAEFYFKDPEGNVVLYPRLTNKMPVPPKEVKPHPYGVDIELLKNMISRQKEDTTVKEFLVKEFQSVGEKTALSVIEMAGLDPDKRVQKLTDDQLSKLVDAMKNFPDFRPPSPEALSTIGADLIELGLKQTFNPEYVGAVTRRPKAYQGHPFIVEVGLAYGGDIQPSEEPTVLRYANKIPLIYDEKSDVVWKVVEEIDWKRYGIEDEQLPLVVMVHLCSTKVPYKSAGKESIADVEEIEKEIRNGIMEASRSLKTFMTEKRKEEEARKRLLTYLKYIPELARSLSIFVTDGKKELAPKVQEEIQNKMIDLVVTKLNIKDKDLELFKSYRVETL</sequence>
<comment type="function">
    <text evidence="1">Relaxes both positive and negative superturns and exhibits a strong decatenase activity.</text>
</comment>
<comment type="catalytic activity">
    <reaction evidence="1">
        <text>ATP-dependent breakage, passage and rejoining of double-stranded DNA.</text>
        <dbReference type="EC" id="5.6.2.2"/>
    </reaction>
</comment>
<comment type="subunit">
    <text evidence="1">Homodimer. Heterotetramer of two Top6A and two Top6B chains.</text>
</comment>
<comment type="similarity">
    <text evidence="1">Belongs to the TOP6B family.</text>
</comment>
<organism>
    <name type="scientific">Metallosphaera sedula (strain ATCC 51363 / DSM 5348 / JCM 9185 / NBRC 15509 / TH2)</name>
    <dbReference type="NCBI Taxonomy" id="399549"/>
    <lineage>
        <taxon>Archaea</taxon>
        <taxon>Thermoproteota</taxon>
        <taxon>Thermoprotei</taxon>
        <taxon>Sulfolobales</taxon>
        <taxon>Sulfolobaceae</taxon>
        <taxon>Metallosphaera</taxon>
    </lineage>
</organism>
<dbReference type="EC" id="5.6.2.2" evidence="1"/>
<dbReference type="EMBL" id="CP000682">
    <property type="protein sequence ID" value="ABP95909.1"/>
    <property type="molecule type" value="Genomic_DNA"/>
</dbReference>
<dbReference type="RefSeq" id="WP_012021696.1">
    <property type="nucleotide sequence ID" value="NC_009440.1"/>
</dbReference>
<dbReference type="SMR" id="A4YHK7"/>
<dbReference type="STRING" id="399549.Msed_1754"/>
<dbReference type="GeneID" id="91756266"/>
<dbReference type="KEGG" id="mse:Msed_1754"/>
<dbReference type="eggNOG" id="arCOG01165">
    <property type="taxonomic scope" value="Archaea"/>
</dbReference>
<dbReference type="HOGENOM" id="CLU_006403_0_0_2"/>
<dbReference type="Proteomes" id="UP000000242">
    <property type="component" value="Chromosome"/>
</dbReference>
<dbReference type="GO" id="GO:0005524">
    <property type="term" value="F:ATP binding"/>
    <property type="evidence" value="ECO:0007669"/>
    <property type="project" value="UniProtKB-UniRule"/>
</dbReference>
<dbReference type="GO" id="GO:0003677">
    <property type="term" value="F:DNA binding"/>
    <property type="evidence" value="ECO:0007669"/>
    <property type="project" value="UniProtKB-UniRule"/>
</dbReference>
<dbReference type="GO" id="GO:0003918">
    <property type="term" value="F:DNA topoisomerase type II (double strand cut, ATP-hydrolyzing) activity"/>
    <property type="evidence" value="ECO:0007669"/>
    <property type="project" value="UniProtKB-UniRule"/>
</dbReference>
<dbReference type="GO" id="GO:0006265">
    <property type="term" value="P:DNA topological change"/>
    <property type="evidence" value="ECO:0007669"/>
    <property type="project" value="UniProtKB-UniRule"/>
</dbReference>
<dbReference type="CDD" id="cd00823">
    <property type="entry name" value="TopoIIB_Trans"/>
    <property type="match status" value="1"/>
</dbReference>
<dbReference type="FunFam" id="3.30.565.10:FF:000062">
    <property type="entry name" value="Type 2 DNA topoisomerase 6 subunit B"/>
    <property type="match status" value="1"/>
</dbReference>
<dbReference type="Gene3D" id="1.10.8.50">
    <property type="match status" value="1"/>
</dbReference>
<dbReference type="Gene3D" id="3.30.230.10">
    <property type="match status" value="1"/>
</dbReference>
<dbReference type="Gene3D" id="3.30.565.10">
    <property type="entry name" value="Histidine kinase-like ATPase, C-terminal domain"/>
    <property type="match status" value="1"/>
</dbReference>
<dbReference type="HAMAP" id="MF_00322">
    <property type="entry name" value="Top6B"/>
    <property type="match status" value="1"/>
</dbReference>
<dbReference type="InterPro" id="IPR036890">
    <property type="entry name" value="HATPase_C_sf"/>
</dbReference>
<dbReference type="InterPro" id="IPR020568">
    <property type="entry name" value="Ribosomal_Su5_D2-typ_SF"/>
</dbReference>
<dbReference type="InterPro" id="IPR010979">
    <property type="entry name" value="Ribosomal_uS13-like_H2TH"/>
</dbReference>
<dbReference type="InterPro" id="IPR014721">
    <property type="entry name" value="Ribsml_uS5_D2-typ_fold_subgr"/>
</dbReference>
<dbReference type="InterPro" id="IPR005734">
    <property type="entry name" value="TopoVI_B"/>
</dbReference>
<dbReference type="InterPro" id="IPR015320">
    <property type="entry name" value="TopoVI_B_transducer"/>
</dbReference>
<dbReference type="NCBIfam" id="NF003218">
    <property type="entry name" value="PRK04184.1"/>
    <property type="match status" value="1"/>
</dbReference>
<dbReference type="NCBIfam" id="TIGR01052">
    <property type="entry name" value="top6b"/>
    <property type="match status" value="1"/>
</dbReference>
<dbReference type="PANTHER" id="PTHR48444">
    <property type="entry name" value="DNA TOPOISOMERASE 6 SUBUNIT B"/>
    <property type="match status" value="1"/>
</dbReference>
<dbReference type="PANTHER" id="PTHR48444:SF1">
    <property type="entry name" value="DNA TOPOISOMERASE 6 SUBUNIT B"/>
    <property type="match status" value="1"/>
</dbReference>
<dbReference type="Pfam" id="PF02518">
    <property type="entry name" value="HATPase_c"/>
    <property type="match status" value="1"/>
</dbReference>
<dbReference type="Pfam" id="PF09239">
    <property type="entry name" value="Topo-VIb_trans"/>
    <property type="match status" value="1"/>
</dbReference>
<dbReference type="PIRSF" id="PIRSF006553">
    <property type="entry name" value="TopoVI_B"/>
    <property type="match status" value="1"/>
</dbReference>
<dbReference type="SMART" id="SM00387">
    <property type="entry name" value="HATPase_c"/>
    <property type="match status" value="1"/>
</dbReference>
<dbReference type="SUPFAM" id="SSF55874">
    <property type="entry name" value="ATPase domain of HSP90 chaperone/DNA topoisomerase II/histidine kinase"/>
    <property type="match status" value="1"/>
</dbReference>
<dbReference type="SUPFAM" id="SSF54211">
    <property type="entry name" value="Ribosomal protein S5 domain 2-like"/>
    <property type="match status" value="1"/>
</dbReference>
<dbReference type="SUPFAM" id="SSF46946">
    <property type="entry name" value="S13-like H2TH domain"/>
    <property type="match status" value="1"/>
</dbReference>
<protein>
    <recommendedName>
        <fullName evidence="1">Type 2 DNA topoisomerase 6 subunit B</fullName>
        <ecNumber evidence="1">5.6.2.2</ecNumber>
    </recommendedName>
    <alternativeName>
        <fullName evidence="1">Type II DNA topoisomerase VI subunit B</fullName>
        <shortName evidence="1">TopoVI-B</shortName>
    </alternativeName>
</protein>
<accession>A4YHK7</accession>
<gene>
    <name evidence="1" type="primary">top6B</name>
    <name type="ordered locus">Msed_1754</name>
</gene>
<evidence type="ECO:0000255" key="1">
    <source>
        <dbReference type="HAMAP-Rule" id="MF_00322"/>
    </source>
</evidence>
<feature type="chain" id="PRO_1000205141" description="Type 2 DNA topoisomerase 6 subunit B">
    <location>
        <begin position="1"/>
        <end position="531"/>
    </location>
</feature>
<feature type="binding site" evidence="1">
    <location>
        <position position="42"/>
    </location>
    <ligand>
        <name>ATP</name>
        <dbReference type="ChEBI" id="CHEBI:30616"/>
    </ligand>
</feature>
<feature type="binding site" evidence="1">
    <location>
        <position position="76"/>
    </location>
    <ligand>
        <name>ATP</name>
        <dbReference type="ChEBI" id="CHEBI:30616"/>
    </ligand>
</feature>
<feature type="binding site" evidence="1">
    <location>
        <begin position="97"/>
        <end position="98"/>
    </location>
    <ligand>
        <name>ATP</name>
        <dbReference type="ChEBI" id="CHEBI:30616"/>
    </ligand>
</feature>
<feature type="binding site" evidence="1">
    <location>
        <begin position="106"/>
        <end position="113"/>
    </location>
    <ligand>
        <name>ATP</name>
        <dbReference type="ChEBI" id="CHEBI:30616"/>
    </ligand>
</feature>
<feature type="binding site" evidence="1">
    <location>
        <position position="427"/>
    </location>
    <ligand>
        <name>ATP</name>
        <dbReference type="ChEBI" id="CHEBI:30616"/>
    </ligand>
</feature>
<name>TOP6B_METS5</name>
<reference key="1">
    <citation type="journal article" date="2008" name="Appl. Environ. Microbiol.">
        <title>The genome sequence of the metal-mobilizing, extremely thermoacidophilic archaeon Metallosphaera sedula provides insights into bioleaching-associated metabolism.</title>
        <authorList>
            <person name="Auernik K.S."/>
            <person name="Maezato Y."/>
            <person name="Blum P.H."/>
            <person name="Kelly R.M."/>
        </authorList>
    </citation>
    <scope>NUCLEOTIDE SEQUENCE [LARGE SCALE GENOMIC DNA]</scope>
    <source>
        <strain>ATCC 51363 / DSM 5348 / JCM 9185 / NBRC 15509 / TH2</strain>
    </source>
</reference>
<proteinExistence type="inferred from homology"/>
<keyword id="KW-0067">ATP-binding</keyword>
<keyword id="KW-0238">DNA-binding</keyword>
<keyword id="KW-0413">Isomerase</keyword>
<keyword id="KW-0547">Nucleotide-binding</keyword>
<keyword id="KW-1185">Reference proteome</keyword>
<keyword id="KW-0799">Topoisomerase</keyword>